<organism>
    <name type="scientific">Eptesicus fuscus</name>
    <name type="common">Big brown bat</name>
    <name type="synonym">Vespertilio fuscus</name>
    <dbReference type="NCBI Taxonomy" id="29078"/>
    <lineage>
        <taxon>Eukaryota</taxon>
        <taxon>Metazoa</taxon>
        <taxon>Chordata</taxon>
        <taxon>Craniata</taxon>
        <taxon>Vertebrata</taxon>
        <taxon>Euteleostomi</taxon>
        <taxon>Mammalia</taxon>
        <taxon>Eutheria</taxon>
        <taxon>Laurasiatheria</taxon>
        <taxon>Chiroptera</taxon>
        <taxon>Yangochiroptera</taxon>
        <taxon>Vespertilionidae</taxon>
        <taxon>Eptesicus</taxon>
    </lineage>
</organism>
<dbReference type="EMBL" id="AF376835">
    <property type="protein sequence ID" value="AAK57654.1"/>
    <property type="molecule type" value="Genomic_DNA"/>
</dbReference>
<dbReference type="SMR" id="Q957C7"/>
<dbReference type="GO" id="GO:0005743">
    <property type="term" value="C:mitochondrial inner membrane"/>
    <property type="evidence" value="ECO:0007669"/>
    <property type="project" value="UniProtKB-SubCell"/>
</dbReference>
<dbReference type="GO" id="GO:0045275">
    <property type="term" value="C:respiratory chain complex III"/>
    <property type="evidence" value="ECO:0007669"/>
    <property type="project" value="InterPro"/>
</dbReference>
<dbReference type="GO" id="GO:0046872">
    <property type="term" value="F:metal ion binding"/>
    <property type="evidence" value="ECO:0007669"/>
    <property type="project" value="UniProtKB-KW"/>
</dbReference>
<dbReference type="GO" id="GO:0008121">
    <property type="term" value="F:ubiquinol-cytochrome-c reductase activity"/>
    <property type="evidence" value="ECO:0007669"/>
    <property type="project" value="InterPro"/>
</dbReference>
<dbReference type="GO" id="GO:0006122">
    <property type="term" value="P:mitochondrial electron transport, ubiquinol to cytochrome c"/>
    <property type="evidence" value="ECO:0007669"/>
    <property type="project" value="TreeGrafter"/>
</dbReference>
<dbReference type="CDD" id="cd00290">
    <property type="entry name" value="cytochrome_b_C"/>
    <property type="match status" value="1"/>
</dbReference>
<dbReference type="CDD" id="cd00284">
    <property type="entry name" value="Cytochrome_b_N"/>
    <property type="match status" value="1"/>
</dbReference>
<dbReference type="FunFam" id="1.20.810.10:FF:000002">
    <property type="entry name" value="Cytochrome b"/>
    <property type="match status" value="1"/>
</dbReference>
<dbReference type="Gene3D" id="1.20.810.10">
    <property type="entry name" value="Cytochrome Bc1 Complex, Chain C"/>
    <property type="match status" value="1"/>
</dbReference>
<dbReference type="InterPro" id="IPR005798">
    <property type="entry name" value="Cyt_b/b6_C"/>
</dbReference>
<dbReference type="InterPro" id="IPR036150">
    <property type="entry name" value="Cyt_b/b6_C_sf"/>
</dbReference>
<dbReference type="InterPro" id="IPR005797">
    <property type="entry name" value="Cyt_b/b6_N"/>
</dbReference>
<dbReference type="InterPro" id="IPR027387">
    <property type="entry name" value="Cytb/b6-like_sf"/>
</dbReference>
<dbReference type="InterPro" id="IPR030689">
    <property type="entry name" value="Cytochrome_b"/>
</dbReference>
<dbReference type="InterPro" id="IPR048260">
    <property type="entry name" value="Cytochrome_b_C_euk/bac"/>
</dbReference>
<dbReference type="InterPro" id="IPR048259">
    <property type="entry name" value="Cytochrome_b_N_euk/bac"/>
</dbReference>
<dbReference type="InterPro" id="IPR016174">
    <property type="entry name" value="Di-haem_cyt_TM"/>
</dbReference>
<dbReference type="PANTHER" id="PTHR19271">
    <property type="entry name" value="CYTOCHROME B"/>
    <property type="match status" value="1"/>
</dbReference>
<dbReference type="PANTHER" id="PTHR19271:SF16">
    <property type="entry name" value="CYTOCHROME B"/>
    <property type="match status" value="1"/>
</dbReference>
<dbReference type="Pfam" id="PF00032">
    <property type="entry name" value="Cytochrom_B_C"/>
    <property type="match status" value="1"/>
</dbReference>
<dbReference type="Pfam" id="PF00033">
    <property type="entry name" value="Cytochrome_B"/>
    <property type="match status" value="1"/>
</dbReference>
<dbReference type="PIRSF" id="PIRSF038885">
    <property type="entry name" value="COB"/>
    <property type="match status" value="1"/>
</dbReference>
<dbReference type="SUPFAM" id="SSF81648">
    <property type="entry name" value="a domain/subunit of cytochrome bc1 complex (Ubiquinol-cytochrome c reductase)"/>
    <property type="match status" value="1"/>
</dbReference>
<dbReference type="SUPFAM" id="SSF81342">
    <property type="entry name" value="Transmembrane di-heme cytochromes"/>
    <property type="match status" value="1"/>
</dbReference>
<dbReference type="PROSITE" id="PS51003">
    <property type="entry name" value="CYTB_CTER"/>
    <property type="match status" value="1"/>
</dbReference>
<dbReference type="PROSITE" id="PS51002">
    <property type="entry name" value="CYTB_NTER"/>
    <property type="match status" value="1"/>
</dbReference>
<reference key="1">
    <citation type="journal article" date="2001" name="Mol. Phylogenet. Evol.">
        <title>Molecular systematics of bats of the genus Myotis (Vespertilionidae) suggests deterministic ecomorphological convergences.</title>
        <authorList>
            <person name="Ruedi M."/>
            <person name="Mayer F."/>
        </authorList>
    </citation>
    <scope>NUCLEOTIDE SEQUENCE [GENOMIC DNA]</scope>
    <source>
        <strain>Isolate MVZ 148681</strain>
    </source>
</reference>
<accession>Q957C7</accession>
<keyword id="KW-0249">Electron transport</keyword>
<keyword id="KW-0349">Heme</keyword>
<keyword id="KW-0408">Iron</keyword>
<keyword id="KW-0472">Membrane</keyword>
<keyword id="KW-0479">Metal-binding</keyword>
<keyword id="KW-0496">Mitochondrion</keyword>
<keyword id="KW-0999">Mitochondrion inner membrane</keyword>
<keyword id="KW-0679">Respiratory chain</keyword>
<keyword id="KW-0812">Transmembrane</keyword>
<keyword id="KW-1133">Transmembrane helix</keyword>
<keyword id="KW-0813">Transport</keyword>
<keyword id="KW-0830">Ubiquinone</keyword>
<feature type="chain" id="PRO_0000060936" description="Cytochrome b">
    <location>
        <begin position="1"/>
        <end position="379"/>
    </location>
</feature>
<feature type="transmembrane region" description="Helical" evidence="2">
    <location>
        <begin position="33"/>
        <end position="53"/>
    </location>
</feature>
<feature type="transmembrane region" description="Helical" evidence="2">
    <location>
        <begin position="77"/>
        <end position="98"/>
    </location>
</feature>
<feature type="transmembrane region" description="Helical" evidence="2">
    <location>
        <begin position="113"/>
        <end position="133"/>
    </location>
</feature>
<feature type="transmembrane region" description="Helical" evidence="2">
    <location>
        <begin position="178"/>
        <end position="198"/>
    </location>
</feature>
<feature type="transmembrane region" description="Helical" evidence="2">
    <location>
        <begin position="226"/>
        <end position="246"/>
    </location>
</feature>
<feature type="transmembrane region" description="Helical" evidence="2">
    <location>
        <begin position="288"/>
        <end position="308"/>
    </location>
</feature>
<feature type="transmembrane region" description="Helical" evidence="2">
    <location>
        <begin position="320"/>
        <end position="340"/>
    </location>
</feature>
<feature type="transmembrane region" description="Helical" evidence="2">
    <location>
        <begin position="347"/>
        <end position="367"/>
    </location>
</feature>
<feature type="binding site" description="axial binding residue" evidence="2">
    <location>
        <position position="83"/>
    </location>
    <ligand>
        <name>heme b</name>
        <dbReference type="ChEBI" id="CHEBI:60344"/>
        <label>b562</label>
    </ligand>
    <ligandPart>
        <name>Fe</name>
        <dbReference type="ChEBI" id="CHEBI:18248"/>
    </ligandPart>
</feature>
<feature type="binding site" description="axial binding residue" evidence="2">
    <location>
        <position position="97"/>
    </location>
    <ligand>
        <name>heme b</name>
        <dbReference type="ChEBI" id="CHEBI:60344"/>
        <label>b566</label>
    </ligand>
    <ligandPart>
        <name>Fe</name>
        <dbReference type="ChEBI" id="CHEBI:18248"/>
    </ligandPart>
</feature>
<feature type="binding site" description="axial binding residue" evidence="2">
    <location>
        <position position="182"/>
    </location>
    <ligand>
        <name>heme b</name>
        <dbReference type="ChEBI" id="CHEBI:60344"/>
        <label>b562</label>
    </ligand>
    <ligandPart>
        <name>Fe</name>
        <dbReference type="ChEBI" id="CHEBI:18248"/>
    </ligandPart>
</feature>
<feature type="binding site" description="axial binding residue" evidence="2">
    <location>
        <position position="196"/>
    </location>
    <ligand>
        <name>heme b</name>
        <dbReference type="ChEBI" id="CHEBI:60344"/>
        <label>b566</label>
    </ligand>
    <ligandPart>
        <name>Fe</name>
        <dbReference type="ChEBI" id="CHEBI:18248"/>
    </ligandPart>
</feature>
<feature type="binding site" evidence="2">
    <location>
        <position position="201"/>
    </location>
    <ligand>
        <name>a ubiquinone</name>
        <dbReference type="ChEBI" id="CHEBI:16389"/>
    </ligand>
</feature>
<protein>
    <recommendedName>
        <fullName>Cytochrome b</fullName>
    </recommendedName>
    <alternativeName>
        <fullName>Complex III subunit 3</fullName>
    </alternativeName>
    <alternativeName>
        <fullName>Complex III subunit III</fullName>
    </alternativeName>
    <alternativeName>
        <fullName>Cytochrome b-c1 complex subunit 3</fullName>
    </alternativeName>
    <alternativeName>
        <fullName>Ubiquinol-cytochrome-c reductase complex cytochrome b subunit</fullName>
    </alternativeName>
</protein>
<proteinExistence type="inferred from homology"/>
<name>CYB_EPTFU</name>
<comment type="function">
    <text evidence="2">Component of the ubiquinol-cytochrome c reductase complex (complex III or cytochrome b-c1 complex) that is part of the mitochondrial respiratory chain. The b-c1 complex mediates electron transfer from ubiquinol to cytochrome c. Contributes to the generation of a proton gradient across the mitochondrial membrane that is then used for ATP synthesis.</text>
</comment>
<comment type="cofactor">
    <cofactor evidence="2">
        <name>heme b</name>
        <dbReference type="ChEBI" id="CHEBI:60344"/>
    </cofactor>
    <text evidence="2">Binds 2 heme b groups non-covalently.</text>
</comment>
<comment type="subunit">
    <text evidence="2">The cytochrome bc1 complex contains 11 subunits: 3 respiratory subunits (MT-CYB, CYC1 and UQCRFS1), 2 core proteins (UQCRC1 and UQCRC2) and 6 low-molecular weight proteins (UQCRH/QCR6, UQCRB/QCR7, UQCRQ/QCR8, UQCR10/QCR9, UQCR11/QCR10 and a cleavage product of UQCRFS1). This cytochrome bc1 complex then forms a dimer.</text>
</comment>
<comment type="subcellular location">
    <subcellularLocation>
        <location evidence="2">Mitochondrion inner membrane</location>
        <topology evidence="2">Multi-pass membrane protein</topology>
    </subcellularLocation>
</comment>
<comment type="miscellaneous">
    <text evidence="1">Heme 1 (or BL or b562) is low-potential and absorbs at about 562 nm, and heme 2 (or BH or b566) is high-potential and absorbs at about 566 nm.</text>
</comment>
<comment type="similarity">
    <text evidence="3 4">Belongs to the cytochrome b family.</text>
</comment>
<comment type="caution">
    <text evidence="2">The full-length protein contains only eight transmembrane helices, not nine as predicted by bioinformatics tools.</text>
</comment>
<geneLocation type="mitochondrion"/>
<gene>
    <name type="primary">MT-CYB</name>
    <name type="synonym">COB</name>
    <name type="synonym">CYTB</name>
    <name type="synonym">MTCYB</name>
</gene>
<evidence type="ECO:0000250" key="1"/>
<evidence type="ECO:0000250" key="2">
    <source>
        <dbReference type="UniProtKB" id="P00157"/>
    </source>
</evidence>
<evidence type="ECO:0000255" key="3">
    <source>
        <dbReference type="PROSITE-ProRule" id="PRU00967"/>
    </source>
</evidence>
<evidence type="ECO:0000255" key="4">
    <source>
        <dbReference type="PROSITE-ProRule" id="PRU00968"/>
    </source>
</evidence>
<sequence>MTNIRKSHPLLKIVNSSFIDLPAPSSISAWWNFGSLLGVCLALQILTGLFLAMHYTSDTTTAFTSVTHICRDVNYGWMLRYLHANGASMFFICLYLHVGRGLYYGSYLYKETWNMGVILLFAVMATAFMGYVLPWGQMSFWGATVITNLLSAIPYIGTNLVEWIWGGFSVDKATLTRFFAFHFLLPFIISAMVMVHLLFLHETGSNNPTGIPSNADMIPFHPYYTIKDILGLFMMITALLALVLFAPDMLGDPDNYMPANPLNTPPHIKPEWYFLFAYAILRSIPNKLGGVLALVASILILIIIPLLHTSKQRSMTFRPISQCLFWLLAADLLTLTWIGGQPVEHPYVIIGQLASILYFLIIIVLMPLIGLMENHLLKW</sequence>